<keyword id="KW-0165">Cleavage on pair of basic residues</keyword>
<keyword id="KW-1015">Disulfide bond</keyword>
<keyword id="KW-0272">Extracellular matrix</keyword>
<keyword id="KW-0325">Glycoprotein</keyword>
<keyword id="KW-0339">Growth factor</keyword>
<keyword id="KW-0497">Mitogen</keyword>
<keyword id="KW-0964">Secreted</keyword>
<keyword id="KW-0732">Signal</keyword>
<evidence type="ECO:0000250" key="1">
    <source>
        <dbReference type="UniProtKB" id="P01137"/>
    </source>
</evidence>
<evidence type="ECO:0000250" key="2">
    <source>
        <dbReference type="UniProtKB" id="P04202"/>
    </source>
</evidence>
<evidence type="ECO:0000250" key="3">
    <source>
        <dbReference type="UniProtKB" id="P07200"/>
    </source>
</evidence>
<evidence type="ECO:0000255" key="4"/>
<evidence type="ECO:0000269" key="5">
    <source>
    </source>
</evidence>
<evidence type="ECO:0000305" key="6"/>
<evidence type="ECO:0000305" key="7">
    <source>
    </source>
</evidence>
<accession>P09533</accession>
<feature type="signal peptide" evidence="7">
    <location>
        <begin position="1"/>
        <end position="29"/>
    </location>
</feature>
<feature type="chain" id="PRO_0000033760" description="Latency-associated peptide" evidence="7">
    <location>
        <begin position="30"/>
        <end position="278"/>
    </location>
</feature>
<feature type="chain" id="PRO_0000033761" description="Transforming growth factor beta-1" evidence="7">
    <location>
        <begin position="279"/>
        <end position="390"/>
    </location>
</feature>
<feature type="region of interest" description="Straightjacket domain" evidence="3">
    <location>
        <begin position="30"/>
        <end position="74"/>
    </location>
</feature>
<feature type="region of interest" description="Arm domain" evidence="3">
    <location>
        <begin position="75"/>
        <end position="271"/>
    </location>
</feature>
<feature type="region of interest" description="Bowtie tail" evidence="1">
    <location>
        <begin position="226"/>
        <end position="252"/>
    </location>
</feature>
<feature type="short sequence motif" description="Cell attachment site" evidence="4">
    <location>
        <begin position="244"/>
        <end position="246"/>
    </location>
</feature>
<feature type="site" description="Cleavage; by FURIN" evidence="1">
    <location>
        <begin position="278"/>
        <end position="279"/>
    </location>
</feature>
<feature type="glycosylation site" description="N-linked (GlcNAc...) asparagine" evidence="5">
    <location>
        <position position="82"/>
    </location>
</feature>
<feature type="glycosylation site" description="N-linked (GlcNAc...) asparagine" evidence="5">
    <location>
        <position position="136"/>
    </location>
</feature>
<feature type="glycosylation site" description="N-linked (GlcNAc...) asparagine" evidence="5">
    <location>
        <position position="176"/>
    </location>
</feature>
<feature type="disulfide bond" description="Interchain (with C-1359 or C-1384 in LTBP1); in inactive form" evidence="3">
    <location>
        <position position="33"/>
    </location>
</feature>
<feature type="disulfide bond" description="Interchain (with C-225)" evidence="1">
    <location>
        <position position="223"/>
    </location>
</feature>
<feature type="disulfide bond" description="Interchain (with C-223)" evidence="1">
    <location>
        <position position="225"/>
    </location>
</feature>
<feature type="disulfide bond" evidence="1">
    <location>
        <begin position="285"/>
        <end position="294"/>
    </location>
</feature>
<feature type="disulfide bond" evidence="1">
    <location>
        <begin position="293"/>
        <end position="356"/>
    </location>
</feature>
<feature type="disulfide bond" evidence="1">
    <location>
        <begin position="322"/>
        <end position="387"/>
    </location>
</feature>
<feature type="disulfide bond" evidence="1">
    <location>
        <begin position="326"/>
        <end position="389"/>
    </location>
</feature>
<feature type="disulfide bond" description="Interchain" evidence="1">
    <location>
        <position position="355"/>
    </location>
</feature>
<name>TGFB1_CHLAE</name>
<protein>
    <recommendedName>
        <fullName>Transforming growth factor beta-1 proprotein</fullName>
    </recommendedName>
    <component>
        <recommendedName>
            <fullName>Latency-associated peptide</fullName>
            <shortName>LAP</shortName>
        </recommendedName>
    </component>
    <component>
        <recommendedName>
            <fullName>Transforming growth factor beta-1</fullName>
            <shortName>TGF-beta-1</shortName>
        </recommendedName>
    </component>
</protein>
<comment type="function">
    <text evidence="1">Transforming growth factor beta-1 proprotein: Precursor of the Latency-associated peptide (LAP) and Transforming growth factor beta-1 (TGF-beta-1) chains, which constitute the regulatory and active subunit of TGF-beta-1, respectively.</text>
</comment>
<comment type="function">
    <molecule>Latency-associated peptide</molecule>
    <text evidence="1">Required to maintain the Transforming growth factor beta-1 (TGF-beta-1) chain in a latent state during storage in extracellular matrix. Associates non-covalently with TGF-beta-1 and regulates its activation via interaction with 'milieu molecules', such as LTBP1, LRRC32/GARP and LRRC33/NRROS, that control activation of TGF-beta-1. Interaction with LRRC33/NRROS regulates activation of TGF-beta-1 in macrophages and microglia. Interaction with LRRC32/GARP controls activation of TGF-beta-1 on the surface of activated regulatory T-cells (Tregs). Interaction with integrins (ITGAV:ITGB6 or ITGAV:ITGB8) results in distortion of the Latency-associated peptide chain and subsequent release of the active TGF-beta-1.</text>
</comment>
<comment type="function">
    <molecule>Transforming growth factor beta-1</molecule>
    <text evidence="1 2">Multifunctional protein that regulates the growth and differentiation of various cell types and is involved in various processes, such as normal development, immune function, microglia function and responses to neurodegeneration (By similarity). Activation into mature form follows different steps: following cleavage of the proprotein in the Golgi apparatus, Latency-associated peptide (LAP) and Transforming growth factor beta-1 (TGF-beta-1) chains remain non-covalently linked rendering TGF-beta-1 inactive during storage in extracellular matrix. At the same time, LAP chain interacts with 'milieu molecules', such as LTBP1, LRRC32/GARP and LRRC33/NRROS that control activation of TGF-beta-1 and maintain it in a latent state during storage in extracellular milieus. TGF-beta-1 is released from LAP by integrins (ITGAV:ITGB6 or ITGAV:ITGB8): integrin-binding to LAP stabilizes an alternative conformation of the LAP bowtie tail and results in distortion of the LAP chain and subsequent release of the active TGF-beta-1. Once activated following release of LAP, TGF-beta-1 acts by binding to TGF-beta receptors (TGFBR1 and TGFBR2), which transduce signal (By similarity). While expressed by many cells types, TGF-beta-1 only has a very localized range of action within cell environment thanks to fine regulation of its activation by Latency-associated peptide chain (LAP) and 'milieu molecules'. Plays an important role in bone remodeling: acts as a potent stimulator of osteoblastic bone formation, causing chemotaxis, proliferation and differentiation in committed osteoblasts. Can promote either T-helper 17 cells (Th17) or regulatory T-cells (Treg) lineage differentiation in a concentration-dependent manner. At high concentrations, leads to FOXP3-mediated suppression of RORC and down-regulation of IL-17 expression, favoring Treg cell development. At low concentrations in concert with IL-6 and IL-21, leads to expression of the IL-17 and IL-23 receptors, favoring differentiation to Th17 cells (By similarity). Stimulates sustained production of collagen through the activation of CREB3L1 by regulated intramembrane proteolysis (RIP). Mediates SMAD2/3 activation by inducing its phosphorylation and subsequent translocation to the nucleus. Positively regulates odontoblastic differentiation in dental papilla cells, via promotion of IPO7-mediated translocation of phosphorylated SMAD2 to the nucleus and subsequent transcription of target genes (By similarity). Can induce epithelial-to-mesenchymal transition (EMT) and cell migration in various cell types (By similarity).</text>
</comment>
<comment type="subunit">
    <text evidence="1 2">Homodimer; disulfide-linked. Interacts with the serine proteases, HTRA1 and HTRA3: the interaction with either inhibits TGFB1-mediated signaling and the HTRA protease activity is required for this inhibition. May interact with THSD4; this interaction may lead to sequestration by FBN1 microfibril assembly and attenuation of TGFB signaling. Interacts with CD109, DPT and ASPN. Interacts with EFEMP2. Interacts with TSKU; the interaction contributes to regulation of the hair cycle. Interacts with TGFBR3 (By similarity).</text>
</comment>
<comment type="subunit">
    <molecule>Latency-associated peptide</molecule>
    <text evidence="1 2">Homodimer; disulfide-linked. Interacts with transforming growth factor beta-1 (TGF-beta-1) chain; interaction is non-covalent and maintains TGF-beta-1 in a latent state; each latency-associated peptide (LAP) monomer interacts with TGF-beta-1 in the other monomer. Interacts with LTBP1; leading to regulation of TGF-beta-1 activation. Interacts with LRRC32/GARP; leading to regulation of TGF-beta-1 activation on the surface of activated regulatory T-cells (Tregs). Interacts with LRRC33/NRROS; leading to regulation of TGF-beta-1 activation in macrophages and microglia. Interacts (via cell attachment site) with integrins ITGAV and ITGB6 (ITGAV:ITGB6), leading to release of the active TGF-beta-1. Interacts with NREP; the interaction results in a decrease in TGFB1 autoinduction. Interacts with HSP90AB1; inhibits latent TGFB1 activation.</text>
</comment>
<comment type="subunit">
    <molecule>Transforming growth factor beta-1</molecule>
    <text evidence="1">Homodimer; disulfide-linked. Interacts with TGF-beta receptors (TGFBR1 and TGFBR2), leading to signal transduction.</text>
</comment>
<comment type="subcellular location">
    <molecule>Latency-associated peptide</molecule>
    <subcellularLocation>
        <location evidence="1">Secreted</location>
        <location evidence="1">Extracellular space</location>
        <location evidence="1">Extracellular matrix</location>
    </subcellularLocation>
</comment>
<comment type="subcellular location">
    <molecule>Transforming growth factor beta-1</molecule>
    <subcellularLocation>
        <location evidence="1">Secreted</location>
    </subcellularLocation>
</comment>
<comment type="domain">
    <molecule>Latency-associated peptide</molecule>
    <text evidence="3">The 'straitjacket' and 'arm' domains encircle the Transforming growth factor beta-1 (TGF-beta-1) monomers and are fastened together by strong bonding between Lys-56 and Tyr-103/Tyr-104.</text>
</comment>
<comment type="domain">
    <molecule>Latency-associated peptide</molecule>
    <text evidence="1">The cell attachment site motif mediates binding to integrins (ITGAV:ITGB6 or ITGAV:ITGB8). The motif locates to a long loop in the arm domain called the bowtie tail. Integrin-binding stabilizes an alternative conformation of the bowtie tail. Activation by integrin requires force application by the actin cytoskeleton, which is resisted by the 'milieu molecules' (such as LTBP1, LRRC32/GARP and/or LRRC33/NRROS), resulting in distortion of the prodomain and release of the active TGF-beta-1.</text>
</comment>
<comment type="PTM">
    <text evidence="1">Transforming growth factor beta-1 proprotein: The precursor proprotein is cleaved in the Golgi apparatus by FURIN to form Transforming growth factor beta-1 (TGF-beta-1) and Latency-associated peptide (LAP) chains, which remain non-covalently linked, rendering TGF-beta-1 inactive.</text>
</comment>
<comment type="PTM">
    <molecule>Latency-associated peptide</molecule>
    <text evidence="1">N-glycosylated. Deglycosylation leads to activation of Transforming growth factor beta-1 (TGF-beta-1); mechanisms triggering deglycosylation-driven activation of TGF-beta-1 are however unclear.</text>
</comment>
<comment type="similarity">
    <text evidence="6">Belongs to the TGF-beta family.</text>
</comment>
<gene>
    <name type="primary">TGFB1</name>
</gene>
<organism>
    <name type="scientific">Chlorocebus aethiops</name>
    <name type="common">Green monkey</name>
    <name type="synonym">Cercopithecus aethiops</name>
    <dbReference type="NCBI Taxonomy" id="9534"/>
    <lineage>
        <taxon>Eukaryota</taxon>
        <taxon>Metazoa</taxon>
        <taxon>Chordata</taxon>
        <taxon>Craniata</taxon>
        <taxon>Vertebrata</taxon>
        <taxon>Euteleostomi</taxon>
        <taxon>Mammalia</taxon>
        <taxon>Eutheria</taxon>
        <taxon>Euarchontoglires</taxon>
        <taxon>Primates</taxon>
        <taxon>Haplorrhini</taxon>
        <taxon>Catarrhini</taxon>
        <taxon>Cercopithecidae</taxon>
        <taxon>Cercopithecinae</taxon>
        <taxon>Chlorocebus</taxon>
    </lineage>
</organism>
<dbReference type="EMBL" id="M16658">
    <property type="protein sequence ID" value="AAA35369.1"/>
    <property type="molecule type" value="mRNA"/>
</dbReference>
<dbReference type="PIR" id="A26960">
    <property type="entry name" value="A26960"/>
</dbReference>
<dbReference type="SMR" id="P09533"/>
<dbReference type="GlyCosmos" id="P09533">
    <property type="glycosylation" value="3 sites, No reported glycans"/>
</dbReference>
<dbReference type="iPTMnet" id="P09533"/>
<dbReference type="PRO" id="PR:P09533"/>
<dbReference type="GO" id="GO:0072562">
    <property type="term" value="C:blood microparticle"/>
    <property type="evidence" value="ECO:0000250"/>
    <property type="project" value="AgBase"/>
</dbReference>
<dbReference type="GO" id="GO:0009986">
    <property type="term" value="C:cell surface"/>
    <property type="evidence" value="ECO:0000250"/>
    <property type="project" value="UniProtKB"/>
</dbReference>
<dbReference type="GO" id="GO:0005737">
    <property type="term" value="C:cytoplasm"/>
    <property type="evidence" value="ECO:0000250"/>
    <property type="project" value="UniProtKB"/>
</dbReference>
<dbReference type="GO" id="GO:0005576">
    <property type="term" value="C:extracellular region"/>
    <property type="evidence" value="ECO:0000304"/>
    <property type="project" value="Reactome"/>
</dbReference>
<dbReference type="GO" id="GO:0005615">
    <property type="term" value="C:extracellular space"/>
    <property type="evidence" value="ECO:0000250"/>
    <property type="project" value="UniProtKB"/>
</dbReference>
<dbReference type="GO" id="GO:0005634">
    <property type="term" value="C:nucleus"/>
    <property type="evidence" value="ECO:0000250"/>
    <property type="project" value="UniProtKB"/>
</dbReference>
<dbReference type="GO" id="GO:0005125">
    <property type="term" value="F:cytokine activity"/>
    <property type="evidence" value="ECO:0007669"/>
    <property type="project" value="TreeGrafter"/>
</dbReference>
<dbReference type="GO" id="GO:0008083">
    <property type="term" value="F:growth factor activity"/>
    <property type="evidence" value="ECO:0007669"/>
    <property type="project" value="UniProtKB-KW"/>
</dbReference>
<dbReference type="GO" id="GO:0034713">
    <property type="term" value="F:type I transforming growth factor beta receptor binding"/>
    <property type="evidence" value="ECO:0000250"/>
    <property type="project" value="AgBase"/>
</dbReference>
<dbReference type="GO" id="GO:0005114">
    <property type="term" value="F:type II transforming growth factor beta receptor binding"/>
    <property type="evidence" value="ECO:0000250"/>
    <property type="project" value="UniProtKB"/>
</dbReference>
<dbReference type="GO" id="GO:0034714">
    <property type="term" value="F:type III transforming growth factor beta receptor binding"/>
    <property type="evidence" value="ECO:0000250"/>
    <property type="project" value="AgBase"/>
</dbReference>
<dbReference type="GO" id="GO:0006754">
    <property type="term" value="P:ATP biosynthetic process"/>
    <property type="evidence" value="ECO:0000250"/>
    <property type="project" value="UniProtKB"/>
</dbReference>
<dbReference type="GO" id="GO:0045216">
    <property type="term" value="P:cell-cell junction organization"/>
    <property type="evidence" value="ECO:0000250"/>
    <property type="project" value="UniProtKB"/>
</dbReference>
<dbReference type="GO" id="GO:0071560">
    <property type="term" value="P:cellular response to transforming growth factor beta stimulus"/>
    <property type="evidence" value="ECO:0000250"/>
    <property type="project" value="AgBase"/>
</dbReference>
<dbReference type="GO" id="GO:0002062">
    <property type="term" value="P:chondrocyte differentiation"/>
    <property type="evidence" value="ECO:0000250"/>
    <property type="project" value="UniProtKB"/>
</dbReference>
<dbReference type="GO" id="GO:0001837">
    <property type="term" value="P:epithelial to mesenchymal transition"/>
    <property type="evidence" value="ECO:0000250"/>
    <property type="project" value="UniProtKB"/>
</dbReference>
<dbReference type="GO" id="GO:0085029">
    <property type="term" value="P:extracellular matrix assembly"/>
    <property type="evidence" value="ECO:0000250"/>
    <property type="project" value="UniProtKB"/>
</dbReference>
<dbReference type="GO" id="GO:0097191">
    <property type="term" value="P:extrinsic apoptotic signaling pathway"/>
    <property type="evidence" value="ECO:0000250"/>
    <property type="project" value="UniProtKB"/>
</dbReference>
<dbReference type="GO" id="GO:0002244">
    <property type="term" value="P:hematopoietic progenitor cell differentiation"/>
    <property type="evidence" value="ECO:0000250"/>
    <property type="project" value="UniProtKB"/>
</dbReference>
<dbReference type="GO" id="GO:0030214">
    <property type="term" value="P:hyaluronan catabolic process"/>
    <property type="evidence" value="ECO:0000250"/>
    <property type="project" value="UniProtKB"/>
</dbReference>
<dbReference type="GO" id="GO:0031293">
    <property type="term" value="P:membrane protein intracellular domain proteolysis"/>
    <property type="evidence" value="ECO:0000250"/>
    <property type="project" value="UniProtKB"/>
</dbReference>
<dbReference type="GO" id="GO:0043537">
    <property type="term" value="P:negative regulation of blood vessel endothelial cell migration"/>
    <property type="evidence" value="ECO:0000250"/>
    <property type="project" value="UniProtKB"/>
</dbReference>
<dbReference type="GO" id="GO:0045786">
    <property type="term" value="P:negative regulation of cell cycle"/>
    <property type="evidence" value="ECO:0000250"/>
    <property type="project" value="UniProtKB"/>
</dbReference>
<dbReference type="GO" id="GO:0030308">
    <property type="term" value="P:negative regulation of cell growth"/>
    <property type="evidence" value="ECO:0000250"/>
    <property type="project" value="UniProtKB"/>
</dbReference>
<dbReference type="GO" id="GO:0008285">
    <property type="term" value="P:negative regulation of cell population proliferation"/>
    <property type="evidence" value="ECO:0000250"/>
    <property type="project" value="UniProtKB"/>
</dbReference>
<dbReference type="GO" id="GO:2000048">
    <property type="term" value="P:negative regulation of cell-cell adhesion mediated by cadherin"/>
    <property type="evidence" value="ECO:0000250"/>
    <property type="project" value="UniProtKB"/>
</dbReference>
<dbReference type="GO" id="GO:0045892">
    <property type="term" value="P:negative regulation of DNA-templated transcription"/>
    <property type="evidence" value="ECO:0000250"/>
    <property type="project" value="UniProtKB"/>
</dbReference>
<dbReference type="GO" id="GO:0050680">
    <property type="term" value="P:negative regulation of epithelial cell proliferation"/>
    <property type="evidence" value="ECO:0000250"/>
    <property type="project" value="UniProtKB"/>
</dbReference>
<dbReference type="GO" id="GO:0045599">
    <property type="term" value="P:negative regulation of fat cell differentiation"/>
    <property type="evidence" value="ECO:0000250"/>
    <property type="project" value="UniProtKB"/>
</dbReference>
<dbReference type="GO" id="GO:0010629">
    <property type="term" value="P:negative regulation of gene expression"/>
    <property type="evidence" value="ECO:0000250"/>
    <property type="project" value="BHF-UCL"/>
</dbReference>
<dbReference type="GO" id="GO:1900126">
    <property type="term" value="P:negative regulation of hyaluronan biosynthetic process"/>
    <property type="evidence" value="ECO:0000250"/>
    <property type="project" value="UniProtKB"/>
</dbReference>
<dbReference type="GO" id="GO:0010936">
    <property type="term" value="P:negative regulation of macrophage cytokine production"/>
    <property type="evidence" value="ECO:0000250"/>
    <property type="project" value="AgBase"/>
</dbReference>
<dbReference type="GO" id="GO:0045662">
    <property type="term" value="P:negative regulation of myoblast differentiation"/>
    <property type="evidence" value="ECO:0000250"/>
    <property type="project" value="UniProtKB"/>
</dbReference>
<dbReference type="GO" id="GO:0048642">
    <property type="term" value="P:negative regulation of skeletal muscle tissue development"/>
    <property type="evidence" value="ECO:0000250"/>
    <property type="project" value="UniProtKB"/>
</dbReference>
<dbReference type="GO" id="GO:0071895">
    <property type="term" value="P:odontoblast differentiation"/>
    <property type="evidence" value="ECO:0000250"/>
    <property type="project" value="UniProtKB"/>
</dbReference>
<dbReference type="GO" id="GO:0006796">
    <property type="term" value="P:phosphate-containing compound metabolic process"/>
    <property type="evidence" value="ECO:0000250"/>
    <property type="project" value="UniProtKB"/>
</dbReference>
<dbReference type="GO" id="GO:0043536">
    <property type="term" value="P:positive regulation of blood vessel endothelial cell migration"/>
    <property type="evidence" value="ECO:0000250"/>
    <property type="project" value="UniProtKB"/>
</dbReference>
<dbReference type="GO" id="GO:0051781">
    <property type="term" value="P:positive regulation of cell division"/>
    <property type="evidence" value="ECO:0007669"/>
    <property type="project" value="UniProtKB-KW"/>
</dbReference>
<dbReference type="GO" id="GO:0030335">
    <property type="term" value="P:positive regulation of cell migration"/>
    <property type="evidence" value="ECO:0000250"/>
    <property type="project" value="UniProtKB"/>
</dbReference>
<dbReference type="GO" id="GO:0008284">
    <property type="term" value="P:positive regulation of cell population proliferation"/>
    <property type="evidence" value="ECO:0000250"/>
    <property type="project" value="UniProtKB"/>
</dbReference>
<dbReference type="GO" id="GO:0050921">
    <property type="term" value="P:positive regulation of chemotaxis"/>
    <property type="evidence" value="ECO:0000250"/>
    <property type="project" value="UniProtKB"/>
</dbReference>
<dbReference type="GO" id="GO:0032967">
    <property type="term" value="P:positive regulation of collagen biosynthetic process"/>
    <property type="evidence" value="ECO:0000250"/>
    <property type="project" value="UniProtKB"/>
</dbReference>
<dbReference type="GO" id="GO:0045742">
    <property type="term" value="P:positive regulation of epidermal growth factor receptor signaling pathway"/>
    <property type="evidence" value="ECO:0000250"/>
    <property type="project" value="UniProtKB"/>
</dbReference>
<dbReference type="GO" id="GO:0010718">
    <property type="term" value="P:positive regulation of epithelial to mesenchymal transition"/>
    <property type="evidence" value="ECO:0000250"/>
    <property type="project" value="UniProtKB"/>
</dbReference>
<dbReference type="GO" id="GO:0070374">
    <property type="term" value="P:positive regulation of ERK1 and ERK2 cascade"/>
    <property type="evidence" value="ECO:0000250"/>
    <property type="project" value="UniProtKB"/>
</dbReference>
<dbReference type="GO" id="GO:0010763">
    <property type="term" value="P:positive regulation of fibroblast migration"/>
    <property type="evidence" value="ECO:0000250"/>
    <property type="project" value="UniProtKB"/>
</dbReference>
<dbReference type="GO" id="GO:0010628">
    <property type="term" value="P:positive regulation of gene expression"/>
    <property type="evidence" value="ECO:0000250"/>
    <property type="project" value="UniProtKB"/>
</dbReference>
<dbReference type="GO" id="GO:0032740">
    <property type="term" value="P:positive regulation of interleukin-17 production"/>
    <property type="evidence" value="ECO:0000250"/>
    <property type="project" value="UniProtKB"/>
</dbReference>
<dbReference type="GO" id="GO:0048298">
    <property type="term" value="P:positive regulation of isotype switching to IgA isotypes"/>
    <property type="evidence" value="ECO:0000250"/>
    <property type="project" value="AgBase"/>
</dbReference>
<dbReference type="GO" id="GO:0014008">
    <property type="term" value="P:positive regulation of microglia differentiation"/>
    <property type="evidence" value="ECO:0000250"/>
    <property type="project" value="UniProtKB"/>
</dbReference>
<dbReference type="GO" id="GO:0042307">
    <property type="term" value="P:positive regulation of protein import into nucleus"/>
    <property type="evidence" value="ECO:0000250"/>
    <property type="project" value="AgBase"/>
</dbReference>
<dbReference type="GO" id="GO:0051247">
    <property type="term" value="P:positive regulation of protein metabolic process"/>
    <property type="evidence" value="ECO:0000250"/>
    <property type="project" value="UniProtKB"/>
</dbReference>
<dbReference type="GO" id="GO:0050714">
    <property type="term" value="P:positive regulation of protein secretion"/>
    <property type="evidence" value="ECO:0000250"/>
    <property type="project" value="UniProtKB"/>
</dbReference>
<dbReference type="GO" id="GO:0031334">
    <property type="term" value="P:positive regulation of protein-containing complex assembly"/>
    <property type="evidence" value="ECO:0000250"/>
    <property type="project" value="UniProtKB"/>
</dbReference>
<dbReference type="GO" id="GO:0060391">
    <property type="term" value="P:positive regulation of SMAD protein signal transduction"/>
    <property type="evidence" value="ECO:0000250"/>
    <property type="project" value="UniProtKB"/>
</dbReference>
<dbReference type="GO" id="GO:0032930">
    <property type="term" value="P:positive regulation of superoxide anion generation"/>
    <property type="evidence" value="ECO:0000250"/>
    <property type="project" value="UniProtKB"/>
</dbReference>
<dbReference type="GO" id="GO:0045944">
    <property type="term" value="P:positive regulation of transcription by RNA polymerase II"/>
    <property type="evidence" value="ECO:0000250"/>
    <property type="project" value="AgBase"/>
</dbReference>
<dbReference type="GO" id="GO:0032801">
    <property type="term" value="P:receptor catabolic process"/>
    <property type="evidence" value="ECO:0000250"/>
    <property type="project" value="UniProtKB"/>
</dbReference>
<dbReference type="GO" id="GO:0070723">
    <property type="term" value="P:response to cholesterol"/>
    <property type="evidence" value="ECO:0000250"/>
    <property type="project" value="UniProtKB"/>
</dbReference>
<dbReference type="GO" id="GO:0032355">
    <property type="term" value="P:response to estradiol"/>
    <property type="evidence" value="ECO:0000250"/>
    <property type="project" value="UniProtKB"/>
</dbReference>
<dbReference type="GO" id="GO:0032570">
    <property type="term" value="P:response to progesterone"/>
    <property type="evidence" value="ECO:0000250"/>
    <property type="project" value="UniProtKB"/>
</dbReference>
<dbReference type="GO" id="GO:0009611">
    <property type="term" value="P:response to wounding"/>
    <property type="evidence" value="ECO:0000250"/>
    <property type="project" value="AgBase"/>
</dbReference>
<dbReference type="GO" id="GO:0007435">
    <property type="term" value="P:salivary gland morphogenesis"/>
    <property type="evidence" value="ECO:0000250"/>
    <property type="project" value="AgBase"/>
</dbReference>
<dbReference type="GO" id="GO:0007179">
    <property type="term" value="P:transforming growth factor beta receptor signaling pathway"/>
    <property type="evidence" value="ECO:0000250"/>
    <property type="project" value="UniProtKB"/>
</dbReference>
<dbReference type="CDD" id="cd19384">
    <property type="entry name" value="TGF_beta_TGFB1"/>
    <property type="match status" value="1"/>
</dbReference>
<dbReference type="FunFam" id="2.10.90.10:FF:000004">
    <property type="entry name" value="Transforming growth factor beta"/>
    <property type="match status" value="1"/>
</dbReference>
<dbReference type="FunFam" id="2.60.120.970:FF:000010">
    <property type="entry name" value="Transforming growth factor beta"/>
    <property type="match status" value="1"/>
</dbReference>
<dbReference type="Gene3D" id="2.60.120.970">
    <property type="match status" value="1"/>
</dbReference>
<dbReference type="Gene3D" id="2.10.90.10">
    <property type="entry name" value="Cystine-knot cytokines"/>
    <property type="match status" value="1"/>
</dbReference>
<dbReference type="InterPro" id="IPR029034">
    <property type="entry name" value="Cystine-knot_cytokine"/>
</dbReference>
<dbReference type="InterPro" id="IPR001839">
    <property type="entry name" value="TGF-b_C"/>
</dbReference>
<dbReference type="InterPro" id="IPR001111">
    <property type="entry name" value="TGF-b_propeptide"/>
</dbReference>
<dbReference type="InterPro" id="IPR016319">
    <property type="entry name" value="TGF-beta"/>
</dbReference>
<dbReference type="InterPro" id="IPR015615">
    <property type="entry name" value="TGF-beta-rel"/>
</dbReference>
<dbReference type="InterPro" id="IPR003939">
    <property type="entry name" value="TGFb1"/>
</dbReference>
<dbReference type="InterPro" id="IPR017948">
    <property type="entry name" value="TGFb_CS"/>
</dbReference>
<dbReference type="PANTHER" id="PTHR11848">
    <property type="entry name" value="TGF-BETA FAMILY"/>
    <property type="match status" value="1"/>
</dbReference>
<dbReference type="PANTHER" id="PTHR11848:SF125">
    <property type="entry name" value="TRANSFORMING GROWTH FACTOR BETA-1 PROPROTEIN"/>
    <property type="match status" value="1"/>
</dbReference>
<dbReference type="Pfam" id="PF00019">
    <property type="entry name" value="TGF_beta"/>
    <property type="match status" value="1"/>
</dbReference>
<dbReference type="Pfam" id="PF00688">
    <property type="entry name" value="TGFb_propeptide"/>
    <property type="match status" value="1"/>
</dbReference>
<dbReference type="PIRSF" id="PIRSF001787">
    <property type="entry name" value="TGF-beta"/>
    <property type="match status" value="1"/>
</dbReference>
<dbReference type="PRINTS" id="PR01423">
    <property type="entry name" value="TGFBETA"/>
</dbReference>
<dbReference type="PRINTS" id="PR01424">
    <property type="entry name" value="TGFBETA1"/>
</dbReference>
<dbReference type="SMART" id="SM00204">
    <property type="entry name" value="TGFB"/>
    <property type="match status" value="1"/>
</dbReference>
<dbReference type="SUPFAM" id="SSF57501">
    <property type="entry name" value="Cystine-knot cytokines"/>
    <property type="match status" value="1"/>
</dbReference>
<dbReference type="PROSITE" id="PS00250">
    <property type="entry name" value="TGF_BETA_1"/>
    <property type="match status" value="1"/>
</dbReference>
<dbReference type="PROSITE" id="PS51362">
    <property type="entry name" value="TGF_BETA_2"/>
    <property type="match status" value="1"/>
</dbReference>
<proteinExistence type="evidence at protein level"/>
<reference key="1">
    <citation type="journal article" date="1987" name="DNA">
        <title>Cloning and sequence analysis of simian transforming growth factor-beta cDNA.</title>
        <authorList>
            <person name="Sharples K."/>
            <person name="Plowman G.D."/>
            <person name="Rose T.M."/>
            <person name="Twardzik D.R."/>
            <person name="Purchio A.F."/>
        </authorList>
    </citation>
    <scope>NUCLEOTIDE SEQUENCE [MRNA]</scope>
</reference>
<reference key="2">
    <citation type="journal article" date="1988" name="J. Biol. Chem.">
        <title>Identification of mannose 6-phosphate in two asparagine-linked sugar chains of recombinant transforming growth factor-beta 1 precursor.</title>
        <authorList>
            <person name="Purchio A.F."/>
            <person name="Cooper J.A."/>
            <person name="Brunner A.M."/>
            <person name="Lioubin M.N."/>
            <person name="Gentry L.E."/>
            <person name="Kovacina K.S."/>
            <person name="Roth R.A."/>
            <person name="Marquardt H."/>
        </authorList>
    </citation>
    <scope>GLYCOSYLATION AT ASN-82; ASN-136 AND ASN-176</scope>
</reference>
<reference key="3">
    <citation type="journal article" date="1988" name="Mol. Cell. Biol.">
        <title>Molecular events in the processing of recombinant type 1 pre-pro-transforming growth factor beta to the mature polypeptide.</title>
        <authorList>
            <person name="Gentry L.E."/>
            <person name="Lioubin M.N."/>
            <person name="Purchio A.F."/>
            <person name="Marquardt H."/>
        </authorList>
    </citation>
    <scope>PROTEOLYTIC CLEAVAGE</scope>
</reference>
<sequence>MPPSGLRLLPLLLPLLWLLVLTPSRPAAGLSTCKTIDMELVKRKRIETIRGQILSKLRLASPPSQGEVPPGPLPEAVLALYNSTRDRVAGESAEPEPEPEADYYAKEVTRVLMVETHNEIYDKFKQSTHSIYMFFNTSELREAVPEPVLLSRAELRLLRLKLKVEQHVELYQKYSNNSWRYLSNRLLAPSNSPEWLSFDVTGVVRQWLSRGGEIEGFRLSAHCSCDSKDNTLQVDINGFTTGRRGDLATIHGMNRPFLLLMATPLERAQHLQSSRHRRALDTNYCFSSTEKNCCVRQLYIDFRKDLGWKWIHEPKGYHANFCLGPCPYIWSLDTQYSKVLALYNQHNPGASAAPCCVPQALEPLPIVYYVGRKPKVEQLSNMIVRSCKCS</sequence>